<keyword id="KW-0025">Alternative splicing</keyword>
<keyword id="KW-0175">Coiled coil</keyword>
<keyword id="KW-0217">Developmental protein</keyword>
<keyword id="KW-0343">GTPase activation</keyword>
<keyword id="KW-0597">Phosphoprotein</keyword>
<keyword id="KW-1185">Reference proteome</keyword>
<keyword id="KW-0677">Repeat</keyword>
<reference key="1">
    <citation type="journal article" date="2001" name="Cell">
        <title>Regulating axon branch stability: the role of p190 RhoGAP in repressing a retraction signaling pathway.</title>
        <authorList>
            <person name="Billuart P."/>
            <person name="Winter C.G."/>
            <person name="Maresh A."/>
            <person name="Zhao X."/>
            <person name="Luo L."/>
        </authorList>
    </citation>
    <scope>NUCLEOTIDE SEQUENCE [MRNA] (ISOFORM 2)</scope>
    <scope>FUNCTION</scope>
    <scope>ACTIVITY REGULATION</scope>
</reference>
<reference key="2">
    <citation type="journal article" date="2000" name="Science">
        <title>The genome sequence of Drosophila melanogaster.</title>
        <authorList>
            <person name="Adams M.D."/>
            <person name="Celniker S.E."/>
            <person name="Holt R.A."/>
            <person name="Evans C.A."/>
            <person name="Gocayne J.D."/>
            <person name="Amanatides P.G."/>
            <person name="Scherer S.E."/>
            <person name="Li P.W."/>
            <person name="Hoskins R.A."/>
            <person name="Galle R.F."/>
            <person name="George R.A."/>
            <person name="Lewis S.E."/>
            <person name="Richards S."/>
            <person name="Ashburner M."/>
            <person name="Henderson S.N."/>
            <person name="Sutton G.G."/>
            <person name="Wortman J.R."/>
            <person name="Yandell M.D."/>
            <person name="Zhang Q."/>
            <person name="Chen L.X."/>
            <person name="Brandon R.C."/>
            <person name="Rogers Y.-H.C."/>
            <person name="Blazej R.G."/>
            <person name="Champe M."/>
            <person name="Pfeiffer B.D."/>
            <person name="Wan K.H."/>
            <person name="Doyle C."/>
            <person name="Baxter E.G."/>
            <person name="Helt G."/>
            <person name="Nelson C.R."/>
            <person name="Miklos G.L.G."/>
            <person name="Abril J.F."/>
            <person name="Agbayani A."/>
            <person name="An H.-J."/>
            <person name="Andrews-Pfannkoch C."/>
            <person name="Baldwin D."/>
            <person name="Ballew R.M."/>
            <person name="Basu A."/>
            <person name="Baxendale J."/>
            <person name="Bayraktaroglu L."/>
            <person name="Beasley E.M."/>
            <person name="Beeson K.Y."/>
            <person name="Benos P.V."/>
            <person name="Berman B.P."/>
            <person name="Bhandari D."/>
            <person name="Bolshakov S."/>
            <person name="Borkova D."/>
            <person name="Botchan M.R."/>
            <person name="Bouck J."/>
            <person name="Brokstein P."/>
            <person name="Brottier P."/>
            <person name="Burtis K.C."/>
            <person name="Busam D.A."/>
            <person name="Butler H."/>
            <person name="Cadieu E."/>
            <person name="Center A."/>
            <person name="Chandra I."/>
            <person name="Cherry J.M."/>
            <person name="Cawley S."/>
            <person name="Dahlke C."/>
            <person name="Davenport L.B."/>
            <person name="Davies P."/>
            <person name="de Pablos B."/>
            <person name="Delcher A."/>
            <person name="Deng Z."/>
            <person name="Mays A.D."/>
            <person name="Dew I."/>
            <person name="Dietz S.M."/>
            <person name="Dodson K."/>
            <person name="Doup L.E."/>
            <person name="Downes M."/>
            <person name="Dugan-Rocha S."/>
            <person name="Dunkov B.C."/>
            <person name="Dunn P."/>
            <person name="Durbin K.J."/>
            <person name="Evangelista C.C."/>
            <person name="Ferraz C."/>
            <person name="Ferriera S."/>
            <person name="Fleischmann W."/>
            <person name="Fosler C."/>
            <person name="Gabrielian A.E."/>
            <person name="Garg N.S."/>
            <person name="Gelbart W.M."/>
            <person name="Glasser K."/>
            <person name="Glodek A."/>
            <person name="Gong F."/>
            <person name="Gorrell J.H."/>
            <person name="Gu Z."/>
            <person name="Guan P."/>
            <person name="Harris M."/>
            <person name="Harris N.L."/>
            <person name="Harvey D.A."/>
            <person name="Heiman T.J."/>
            <person name="Hernandez J.R."/>
            <person name="Houck J."/>
            <person name="Hostin D."/>
            <person name="Houston K.A."/>
            <person name="Howland T.J."/>
            <person name="Wei M.-H."/>
            <person name="Ibegwam C."/>
            <person name="Jalali M."/>
            <person name="Kalush F."/>
            <person name="Karpen G.H."/>
            <person name="Ke Z."/>
            <person name="Kennison J.A."/>
            <person name="Ketchum K.A."/>
            <person name="Kimmel B.E."/>
            <person name="Kodira C.D."/>
            <person name="Kraft C.L."/>
            <person name="Kravitz S."/>
            <person name="Kulp D."/>
            <person name="Lai Z."/>
            <person name="Lasko P."/>
            <person name="Lei Y."/>
            <person name="Levitsky A.A."/>
            <person name="Li J.H."/>
            <person name="Li Z."/>
            <person name="Liang Y."/>
            <person name="Lin X."/>
            <person name="Liu X."/>
            <person name="Mattei B."/>
            <person name="McIntosh T.C."/>
            <person name="McLeod M.P."/>
            <person name="McPherson D."/>
            <person name="Merkulov G."/>
            <person name="Milshina N.V."/>
            <person name="Mobarry C."/>
            <person name="Morris J."/>
            <person name="Moshrefi A."/>
            <person name="Mount S.M."/>
            <person name="Moy M."/>
            <person name="Murphy B."/>
            <person name="Murphy L."/>
            <person name="Muzny D.M."/>
            <person name="Nelson D.L."/>
            <person name="Nelson D.R."/>
            <person name="Nelson K.A."/>
            <person name="Nixon K."/>
            <person name="Nusskern D.R."/>
            <person name="Pacleb J.M."/>
            <person name="Palazzolo M."/>
            <person name="Pittman G.S."/>
            <person name="Pan S."/>
            <person name="Pollard J."/>
            <person name="Puri V."/>
            <person name="Reese M.G."/>
            <person name="Reinert K."/>
            <person name="Remington K."/>
            <person name="Saunders R.D.C."/>
            <person name="Scheeler F."/>
            <person name="Shen H."/>
            <person name="Shue B.C."/>
            <person name="Siden-Kiamos I."/>
            <person name="Simpson M."/>
            <person name="Skupski M.P."/>
            <person name="Smith T.J."/>
            <person name="Spier E."/>
            <person name="Spradling A.C."/>
            <person name="Stapleton M."/>
            <person name="Strong R."/>
            <person name="Sun E."/>
            <person name="Svirskas R."/>
            <person name="Tector C."/>
            <person name="Turner R."/>
            <person name="Venter E."/>
            <person name="Wang A.H."/>
            <person name="Wang X."/>
            <person name="Wang Z.-Y."/>
            <person name="Wassarman D.A."/>
            <person name="Weinstock G.M."/>
            <person name="Weissenbach J."/>
            <person name="Williams S.M."/>
            <person name="Woodage T."/>
            <person name="Worley K.C."/>
            <person name="Wu D."/>
            <person name="Yang S."/>
            <person name="Yao Q.A."/>
            <person name="Ye J."/>
            <person name="Yeh R.-F."/>
            <person name="Zaveri J.S."/>
            <person name="Zhan M."/>
            <person name="Zhang G."/>
            <person name="Zhao Q."/>
            <person name="Zheng L."/>
            <person name="Zheng X.H."/>
            <person name="Zhong F.N."/>
            <person name="Zhong W."/>
            <person name="Zhou X."/>
            <person name="Zhu S.C."/>
            <person name="Zhu X."/>
            <person name="Smith H.O."/>
            <person name="Gibbs R.A."/>
            <person name="Myers E.W."/>
            <person name="Rubin G.M."/>
            <person name="Venter J.C."/>
        </authorList>
    </citation>
    <scope>NUCLEOTIDE SEQUENCE [LARGE SCALE GENOMIC DNA]</scope>
    <source>
        <strain>Berkeley</strain>
    </source>
</reference>
<reference key="3">
    <citation type="journal article" date="2002" name="Genome Biol.">
        <title>Annotation of the Drosophila melanogaster euchromatic genome: a systematic review.</title>
        <authorList>
            <person name="Misra S."/>
            <person name="Crosby M.A."/>
            <person name="Mungall C.J."/>
            <person name="Matthews B.B."/>
            <person name="Campbell K.S."/>
            <person name="Hradecky P."/>
            <person name="Huang Y."/>
            <person name="Kaminker J.S."/>
            <person name="Millburn G.H."/>
            <person name="Prochnik S.E."/>
            <person name="Smith C.D."/>
            <person name="Tupy J.L."/>
            <person name="Whitfield E.J."/>
            <person name="Bayraktaroglu L."/>
            <person name="Berman B.P."/>
            <person name="Bettencourt B.R."/>
            <person name="Celniker S.E."/>
            <person name="de Grey A.D.N.J."/>
            <person name="Drysdale R.A."/>
            <person name="Harris N.L."/>
            <person name="Richter J."/>
            <person name="Russo S."/>
            <person name="Schroeder A.J."/>
            <person name="Shu S.Q."/>
            <person name="Stapleton M."/>
            <person name="Yamada C."/>
            <person name="Ashburner M."/>
            <person name="Gelbart W.M."/>
            <person name="Rubin G.M."/>
            <person name="Lewis S.E."/>
        </authorList>
    </citation>
    <scope>GENOME REANNOTATION</scope>
    <source>
        <strain>Berkeley</strain>
    </source>
</reference>
<reference key="4">
    <citation type="journal article" date="2002" name="Genome Biol.">
        <title>A Drosophila full-length cDNA resource.</title>
        <authorList>
            <person name="Stapleton M."/>
            <person name="Carlson J.W."/>
            <person name="Brokstein P."/>
            <person name="Yu C."/>
            <person name="Champe M."/>
            <person name="George R.A."/>
            <person name="Guarin H."/>
            <person name="Kronmiller B."/>
            <person name="Pacleb J.M."/>
            <person name="Park S."/>
            <person name="Wan K.H."/>
            <person name="Rubin G.M."/>
            <person name="Celniker S.E."/>
        </authorList>
    </citation>
    <scope>NUCLEOTIDE SEQUENCE [LARGE SCALE MRNA] (ISOFORM 1)</scope>
    <source>
        <strain>Berkeley</strain>
        <tissue>Embryo</tissue>
    </source>
</reference>
<reference key="5">
    <citation type="journal article" date="2007" name="J. Cell Sci.">
        <title>Reciprocal regulation of Rac1 and Rho1 in Drosophila circulating immune surveillance cells.</title>
        <authorList>
            <person name="Williams M.J."/>
            <person name="Habayeb M.S."/>
            <person name="Hultmark D."/>
        </authorList>
    </citation>
    <scope>ACTIVITY REGULATION</scope>
</reference>
<reference key="6">
    <citation type="journal article" date="2008" name="J. Proteome Res.">
        <title>Phosphoproteome analysis of Drosophila melanogaster embryos.</title>
        <authorList>
            <person name="Zhai B."/>
            <person name="Villen J."/>
            <person name="Beausoleil S.A."/>
            <person name="Mintseris J."/>
            <person name="Gygi S.P."/>
        </authorList>
    </citation>
    <scope>PHOSPHORYLATION [LARGE SCALE ANALYSIS] AT SER-973; SER-975; SER-985; SER-988 AND SER-996</scope>
    <scope>IDENTIFICATION BY MASS SPECTROMETRY</scope>
    <source>
        <tissue>Embryo</tissue>
    </source>
</reference>
<evidence type="ECO:0000255" key="1">
    <source>
        <dbReference type="PROSITE-ProRule" id="PRU00172"/>
    </source>
</evidence>
<evidence type="ECO:0000255" key="2">
    <source>
        <dbReference type="PROSITE-ProRule" id="PRU01199"/>
    </source>
</evidence>
<evidence type="ECO:0000255" key="3">
    <source>
        <dbReference type="PROSITE-ProRule" id="PRU01200"/>
    </source>
</evidence>
<evidence type="ECO:0000256" key="4">
    <source>
        <dbReference type="SAM" id="MobiDB-lite"/>
    </source>
</evidence>
<evidence type="ECO:0000269" key="5">
    <source>
    </source>
</evidence>
<evidence type="ECO:0000269" key="6">
    <source>
    </source>
</evidence>
<evidence type="ECO:0000269" key="7">
    <source>
    </source>
</evidence>
<evidence type="ECO:0000303" key="8">
    <source>
    </source>
</evidence>
<evidence type="ECO:0000305" key="9"/>
<organism>
    <name type="scientific">Drosophila melanogaster</name>
    <name type="common">Fruit fly</name>
    <dbReference type="NCBI Taxonomy" id="7227"/>
    <lineage>
        <taxon>Eukaryota</taxon>
        <taxon>Metazoa</taxon>
        <taxon>Ecdysozoa</taxon>
        <taxon>Arthropoda</taxon>
        <taxon>Hexapoda</taxon>
        <taxon>Insecta</taxon>
        <taxon>Pterygota</taxon>
        <taxon>Neoptera</taxon>
        <taxon>Endopterygota</taxon>
        <taxon>Diptera</taxon>
        <taxon>Brachycera</taxon>
        <taxon>Muscomorpha</taxon>
        <taxon>Ephydroidea</taxon>
        <taxon>Drosophilidae</taxon>
        <taxon>Drosophila</taxon>
        <taxon>Sophophora</taxon>
    </lineage>
</organism>
<sequence length="1561" mass="178772">MRQFNISVIGLSGTEKDRGQVGVGKSCLCNRFMRPMADDYFIDHISVLSQSDFSGRIVNNDHFLYWGDVRKTTEEGVEYQFNIIEQTEFMDDSTFQAFKVGKMDPYSKRCTATKVFSAEKLMYICKNQLGIEKEYEQKVMPDGRLSIDGFVVVFDVSPVPNRSVEKQVEFVQNVIATILKNKKPLVLVTTKNDDAYELYVREAEKISQRKDYKSTVQLIETSAHESINIDLAFLLLAQMIDKVKNRVKIISYQESAKSRKELLDTRSEAVTRLIRNQITDYHVLWSQGSKMLSQYREWNEFLNIFGHEAGQKLFRRHMKKLRDDHLNKKLHQYLDKFALALEYLLPDIGALNISDDDAWECARNYLQNHIEFEQYFFECPQASWTELVDMDEAEDEARIPFDVLETSEAETVFRNYLNSVQQDKKKIGWKQQFKMLLEESGFVTPGKQLSEVRVLFMGRECFEALSEHDCQQIYDIHQDDIIEKSKQNFVELLLEHAQYFLQFKNVDNITQEDVRQITDVIQEDSRYKMLDRLDQERRLMLVQHLRFIHCPIRDHCPFFYNCVDSLIEEVLSDKSASNHKTPSGGGWKSSGSGSDRTLNLLIVGSEHLASDLLNDIRICTGSKGEYIYENQTYYLNYRIANGDMEAFKAIDVYSSGLICVYSNQQSFETLKDNLERTLLCNLELEDKFENLPIVLVYQPQDLKENEVEYLRNEGMRLSEMLHCDFIDHTQNHQKYVYDILNIVILSLKLTEMKSYEPYPSNHTDLRILCCIFCGDQYDIENIVQPLVEESTLVKANEHSIIVDVFIGDAKRRVEFILSSYHGTSQYRDELIHGYIYFYSTKRRSSLANLSILAAQNANIPLQIIAVTESGGVNAFFNSDICQFLITEGNAVADRFKGSFMTFSADQYVKFAFYNPFLKTAWDNKYEVENLHVEESITLDSGEGTLENSVNQMPRPPPRHESYMLSNTLGTDGSGSENYEMAPTRSLNSLNEERDISLDEIYDDNEKPKHLHQKWLEDKSDGRRNMNKNLIWNNFSGSTHAYTTGRRHIDSNLNKIRPKGPSQTLKVGEAPSRNCPAMSSSTFTLPTQQPGKLNMKNFQLVSDAVAKMNFTGSGSGSGSGSGSGSTGLGLGLGSGSGCMGDSFLEPVDKDGKRYDHAQLDGEDEDSEELAEYEQIYENEDCTESDSCASSTERRVRQQNAYYKASKKPVAAKKQKKKKVAIPVQTPRVPPFGSYVSPPEIPLHYQRMAVGGSGPEKPEPCVPEFMKSDKSPEYSMVPELAGAGIFGAENLPEYNMNQAKCLKDFEKLEKRRIKEETARQRKLQEKEKEQEKKLKRKLKQNAKGLVESAEAQFGKLMITSEQGEIPIFLNKCVEFIEKEGLDSEGIYRVPGSRAHVDMLFQRFEEDTNTEIDALDIPVNAVATALKDFFSKRLPPLFSKDIIKELEEIAGSRGVGNSKLNVEVKTDRSCRLIALKSLLQKLPPINFAILKYIFQHFVHVSDNSKLNSMDSKNLAICWWPTLIPIDFTDMGHFEQLRPYLEDIVQTMIDQFPYLFCGKDAFVMV</sequence>
<feature type="chain" id="PRO_0000372856" description="Rho GTPase-activating protein 190">
    <location>
        <begin position="1"/>
        <end position="1561"/>
    </location>
</feature>
<feature type="domain" description="FF 1">
    <location>
        <begin position="252"/>
        <end position="320"/>
    </location>
</feature>
<feature type="domain" description="FF 2">
    <location>
        <begin position="365"/>
        <end position="419"/>
    </location>
</feature>
<feature type="domain" description="FF 3">
    <location>
        <begin position="426"/>
        <end position="480"/>
    </location>
</feature>
<feature type="domain" description="FF 4">
    <location>
        <begin position="482"/>
        <end position="547"/>
    </location>
</feature>
<feature type="domain" description="pG1 pseudoGTPase" evidence="2">
    <location>
        <begin position="592"/>
        <end position="765"/>
    </location>
</feature>
<feature type="domain" description="pG2 pseudoGTPase" evidence="3">
    <location>
        <begin position="766"/>
        <end position="926"/>
    </location>
</feature>
<feature type="domain" description="Rho-GAP" evidence="1">
    <location>
        <begin position="1349"/>
        <end position="1552"/>
    </location>
</feature>
<feature type="region of interest" description="Disordered" evidence="4">
    <location>
        <begin position="1054"/>
        <end position="1074"/>
    </location>
</feature>
<feature type="site" description="Arginine finger; crucial for GTP hydrolysis by stabilizing the transition state" evidence="1">
    <location>
        <position position="1386"/>
    </location>
</feature>
<feature type="modified residue" description="Phosphoserine" evidence="7">
    <location>
        <position position="973"/>
    </location>
</feature>
<feature type="modified residue" description="Phosphoserine" evidence="7">
    <location>
        <position position="975"/>
    </location>
</feature>
<feature type="modified residue" description="Phosphoserine" evidence="7">
    <location>
        <position position="985"/>
    </location>
</feature>
<feature type="modified residue" description="Phosphoserine" evidence="7">
    <location>
        <position position="988"/>
    </location>
</feature>
<feature type="modified residue" description="Phosphoserine" evidence="7">
    <location>
        <position position="996"/>
    </location>
</feature>
<feature type="splice variant" id="VSP_037211" description="In isoform 2." evidence="8">
    <original>PE</original>
    <variation>PGEKK</variation>
    <location>
        <begin position="1253"/>
        <end position="1254"/>
    </location>
</feature>
<feature type="sequence conflict" description="In Ref. 4; AAM51993." evidence="9" ref="4">
    <original>D</original>
    <variation>G</variation>
    <location>
        <position position="356"/>
    </location>
</feature>
<feature type="sequence conflict" description="In Ref. 4; AAM51993." evidence="9" ref="4">
    <original>N</original>
    <variation>Y</variation>
    <location>
        <position position="505"/>
    </location>
</feature>
<feature type="sequence conflict" description="In Ref. 4; AAM51993." evidence="9" ref="4">
    <original>K</original>
    <variation>E</variation>
    <location>
        <position position="580"/>
    </location>
</feature>
<proteinExistence type="evidence at protein level"/>
<gene>
    <name type="primary">RhoGAPp190</name>
    <name type="ORF">CG32555</name>
</gene>
<protein>
    <recommendedName>
        <fullName>Rho GTPase-activating protein 190</fullName>
    </recommendedName>
    <alternativeName>
        <fullName>Rho GTPase-activating protein of 190 kDa</fullName>
    </alternativeName>
</protein>
<dbReference type="EMBL" id="AF387518">
    <property type="protein sequence ID" value="AAL01872.1"/>
    <property type="molecule type" value="mRNA"/>
</dbReference>
<dbReference type="EMBL" id="AE014298">
    <property type="protein sequence ID" value="AAF48748.2"/>
    <property type="molecule type" value="Genomic_DNA"/>
</dbReference>
<dbReference type="EMBL" id="AE014298">
    <property type="protein sequence ID" value="AAF48749.2"/>
    <property type="molecule type" value="Genomic_DNA"/>
</dbReference>
<dbReference type="EMBL" id="AE014298">
    <property type="protein sequence ID" value="AAN09591.1"/>
    <property type="molecule type" value="Genomic_DNA"/>
</dbReference>
<dbReference type="EMBL" id="AY121666">
    <property type="protein sequence ID" value="AAM51993.1"/>
    <property type="molecule type" value="mRNA"/>
</dbReference>
<dbReference type="RefSeq" id="NP_001259656.1">
    <molecule id="Q9VX32-2"/>
    <property type="nucleotide sequence ID" value="NM_001272727.1"/>
</dbReference>
<dbReference type="RefSeq" id="NP_573231.2">
    <molecule id="Q9VX32-1"/>
    <property type="nucleotide sequence ID" value="NM_133003.3"/>
</dbReference>
<dbReference type="RefSeq" id="NP_728089.1">
    <molecule id="Q9VX32-1"/>
    <property type="nucleotide sequence ID" value="NM_167572.2"/>
</dbReference>
<dbReference type="RefSeq" id="NP_728090.1">
    <molecule id="Q9VX32-1"/>
    <property type="nucleotide sequence ID" value="NM_167573.2"/>
</dbReference>
<dbReference type="SMR" id="Q9VX32"/>
<dbReference type="BioGRID" id="59069">
    <property type="interactions" value="14"/>
</dbReference>
<dbReference type="FunCoup" id="Q9VX32">
    <property type="interactions" value="1236"/>
</dbReference>
<dbReference type="IntAct" id="Q9VX32">
    <property type="interactions" value="1"/>
</dbReference>
<dbReference type="STRING" id="7227.FBpp0305817"/>
<dbReference type="GlyGen" id="Q9VX32">
    <property type="glycosylation" value="1 site"/>
</dbReference>
<dbReference type="iPTMnet" id="Q9VX32"/>
<dbReference type="PaxDb" id="7227-FBpp0305817"/>
<dbReference type="EnsemblMetazoa" id="FBtr0074481">
    <molecule id="Q9VX32-1"/>
    <property type="protein sequence ID" value="FBpp0074255"/>
    <property type="gene ID" value="FBgn0026375"/>
</dbReference>
<dbReference type="EnsemblMetazoa" id="FBtr0074482">
    <molecule id="Q9VX32-1"/>
    <property type="protein sequence ID" value="FBpp0074256"/>
    <property type="gene ID" value="FBgn0026375"/>
</dbReference>
<dbReference type="EnsemblMetazoa" id="FBtr0074483">
    <molecule id="Q9VX32-1"/>
    <property type="protein sequence ID" value="FBpp0074257"/>
    <property type="gene ID" value="FBgn0026375"/>
</dbReference>
<dbReference type="EnsemblMetazoa" id="FBtr0333659">
    <molecule id="Q9VX32-2"/>
    <property type="protein sequence ID" value="FBpp0305815"/>
    <property type="gene ID" value="FBgn0026375"/>
</dbReference>
<dbReference type="GeneID" id="32743"/>
<dbReference type="KEGG" id="dme:Dmel_CG32555"/>
<dbReference type="UCSC" id="CG32555-RA">
    <molecule id="Q9VX32-1"/>
    <property type="organism name" value="d. melanogaster"/>
</dbReference>
<dbReference type="AGR" id="FB:FBgn0026375"/>
<dbReference type="CTD" id="32743"/>
<dbReference type="FlyBase" id="FBgn0026375">
    <property type="gene designation" value="RhoGAPp190"/>
</dbReference>
<dbReference type="VEuPathDB" id="VectorBase:FBgn0026375"/>
<dbReference type="eggNOG" id="KOG4271">
    <property type="taxonomic scope" value="Eukaryota"/>
</dbReference>
<dbReference type="InParanoid" id="Q9VX32"/>
<dbReference type="OrthoDB" id="9994905at2759"/>
<dbReference type="PhylomeDB" id="Q9VX32"/>
<dbReference type="Reactome" id="R-DME-350407">
    <property type="pathway name" value="RHO1 GTPase cycle"/>
</dbReference>
<dbReference type="Reactome" id="R-DME-8849471">
    <property type="pathway name" value="PTK6 Regulates RHO GTPases, RAS GTPase and MAP kinases"/>
</dbReference>
<dbReference type="Reactome" id="R-DME-8980692">
    <property type="pathway name" value="RHOA GTPase cycle"/>
</dbReference>
<dbReference type="Reactome" id="R-DME-9013026">
    <property type="pathway name" value="RHOB GTPase cycle"/>
</dbReference>
<dbReference type="Reactome" id="R-DME-9013148">
    <property type="pathway name" value="CDC42 GTPase cycle"/>
</dbReference>
<dbReference type="Reactome" id="R-DME-9013149">
    <property type="pathway name" value="RAC1 GTPase cycle"/>
</dbReference>
<dbReference type="Reactome" id="R-DME-9013404">
    <property type="pathway name" value="RAC2 GTPase cycle"/>
</dbReference>
<dbReference type="Reactome" id="R-DME-9013405">
    <property type="pathway name" value="RHOD GTPase cycle"/>
</dbReference>
<dbReference type="Reactome" id="R-DME-9013406">
    <property type="pathway name" value="RHOQ GTPase cycle"/>
</dbReference>
<dbReference type="Reactome" id="R-DME-9013408">
    <property type="pathway name" value="RHOG GTPase cycle"/>
</dbReference>
<dbReference type="Reactome" id="R-DME-9013409">
    <property type="pathway name" value="RHOJ GTPase cycle"/>
</dbReference>
<dbReference type="Reactome" id="R-DME-9013423">
    <property type="pathway name" value="RAC3 GTPase cycle"/>
</dbReference>
<dbReference type="Reactome" id="R-DME-9035034">
    <property type="pathway name" value="RHOF GTPase cycle"/>
</dbReference>
<dbReference type="SignaLink" id="Q9VX32"/>
<dbReference type="BioGRID-ORCS" id="32743">
    <property type="hits" value="0 hits in 3 CRISPR screens"/>
</dbReference>
<dbReference type="GenomeRNAi" id="32743"/>
<dbReference type="PRO" id="PR:Q9VX32"/>
<dbReference type="Proteomes" id="UP000000803">
    <property type="component" value="Chromosome X"/>
</dbReference>
<dbReference type="Bgee" id="FBgn0026375">
    <property type="expression patterns" value="Expressed in proximal medullary amacrine neuron Pm2 (Drosophila) in insect head and 296 other cell types or tissues"/>
</dbReference>
<dbReference type="ExpressionAtlas" id="Q9VX32">
    <property type="expression patterns" value="baseline and differential"/>
</dbReference>
<dbReference type="GO" id="GO:0005829">
    <property type="term" value="C:cytosol"/>
    <property type="evidence" value="ECO:0000318"/>
    <property type="project" value="GO_Central"/>
</dbReference>
<dbReference type="GO" id="GO:0005525">
    <property type="term" value="F:GTP binding"/>
    <property type="evidence" value="ECO:0007669"/>
    <property type="project" value="InterPro"/>
</dbReference>
<dbReference type="GO" id="GO:0005096">
    <property type="term" value="F:GTPase activator activity"/>
    <property type="evidence" value="ECO:0000316"/>
    <property type="project" value="FlyBase"/>
</dbReference>
<dbReference type="GO" id="GO:0003924">
    <property type="term" value="F:GTPase activity"/>
    <property type="evidence" value="ECO:0007669"/>
    <property type="project" value="InterPro"/>
</dbReference>
<dbReference type="GO" id="GO:0030215">
    <property type="term" value="F:semaphorin receptor binding"/>
    <property type="evidence" value="ECO:0000353"/>
    <property type="project" value="FlyBase"/>
</dbReference>
<dbReference type="GO" id="GO:0007415">
    <property type="term" value="P:defasciculation of motor neuron axon"/>
    <property type="evidence" value="ECO:0000315"/>
    <property type="project" value="FlyBase"/>
</dbReference>
<dbReference type="GO" id="GO:0016319">
    <property type="term" value="P:mushroom body development"/>
    <property type="evidence" value="ECO:0000315"/>
    <property type="project" value="FlyBase"/>
</dbReference>
<dbReference type="GO" id="GO:0045792">
    <property type="term" value="P:negative regulation of cell size"/>
    <property type="evidence" value="ECO:0000315"/>
    <property type="project" value="FlyBase"/>
</dbReference>
<dbReference type="GO" id="GO:0050770">
    <property type="term" value="P:regulation of axonogenesis"/>
    <property type="evidence" value="ECO:0000316"/>
    <property type="project" value="FlyBase"/>
</dbReference>
<dbReference type="GO" id="GO:0008361">
    <property type="term" value="P:regulation of cell size"/>
    <property type="evidence" value="ECO:0000318"/>
    <property type="project" value="GO_Central"/>
</dbReference>
<dbReference type="GO" id="GO:0007266">
    <property type="term" value="P:Rho protein signal transduction"/>
    <property type="evidence" value="ECO:0000316"/>
    <property type="project" value="FlyBase"/>
</dbReference>
<dbReference type="CDD" id="cd22207">
    <property type="entry name" value="pseudoGTPaseD_p190RhoGAP"/>
    <property type="match status" value="1"/>
</dbReference>
<dbReference type="CDD" id="cd04373">
    <property type="entry name" value="RhoGAP_p190"/>
    <property type="match status" value="1"/>
</dbReference>
<dbReference type="FunFam" id="1.10.555.10:FF:000047">
    <property type="entry name" value="rho GTPase-activating protein 190 isoform X3"/>
    <property type="match status" value="1"/>
</dbReference>
<dbReference type="FunFam" id="1.10.10.440:FF:000023">
    <property type="entry name" value="Uncharacterized protein, isoform C"/>
    <property type="match status" value="1"/>
</dbReference>
<dbReference type="Gene3D" id="1.10.10.440">
    <property type="entry name" value="FF domain"/>
    <property type="match status" value="2"/>
</dbReference>
<dbReference type="Gene3D" id="3.40.50.300">
    <property type="entry name" value="P-loop containing nucleotide triphosphate hydrolases"/>
    <property type="match status" value="1"/>
</dbReference>
<dbReference type="Gene3D" id="1.10.555.10">
    <property type="entry name" value="Rho GTPase activation protein"/>
    <property type="match status" value="1"/>
</dbReference>
<dbReference type="InterPro" id="IPR002713">
    <property type="entry name" value="FF_domain"/>
</dbReference>
<dbReference type="InterPro" id="IPR036517">
    <property type="entry name" value="FF_domain_sf"/>
</dbReference>
<dbReference type="InterPro" id="IPR027417">
    <property type="entry name" value="P-loop_NTPase"/>
</dbReference>
<dbReference type="InterPro" id="IPR039007">
    <property type="entry name" value="pG1"/>
</dbReference>
<dbReference type="InterPro" id="IPR051978">
    <property type="entry name" value="Rho-GAP_domain"/>
</dbReference>
<dbReference type="InterPro" id="IPR008936">
    <property type="entry name" value="Rho_GTPase_activation_prot"/>
</dbReference>
<dbReference type="InterPro" id="IPR032835">
    <property type="entry name" value="RhoGAP-FF1"/>
</dbReference>
<dbReference type="InterPro" id="IPR000198">
    <property type="entry name" value="RhoGAP_dom"/>
</dbReference>
<dbReference type="InterPro" id="IPR045786">
    <property type="entry name" value="RhoGAP_pG1_pG2"/>
</dbReference>
<dbReference type="InterPro" id="IPR039006">
    <property type="entry name" value="RhoGAP_pG2"/>
</dbReference>
<dbReference type="InterPro" id="IPR001806">
    <property type="entry name" value="Small_GTPase"/>
</dbReference>
<dbReference type="PANTHER" id="PTHR46005">
    <property type="entry name" value="RHO GTPASE-ACTIVATING PROTEIN 190"/>
    <property type="match status" value="1"/>
</dbReference>
<dbReference type="PANTHER" id="PTHR46005:SF4">
    <property type="entry name" value="RHO GTPASE-ACTIVATING PROTEIN 190"/>
    <property type="match status" value="1"/>
</dbReference>
<dbReference type="Pfam" id="PF23083">
    <property type="entry name" value="FF_RHG35_4th"/>
    <property type="match status" value="1"/>
</dbReference>
<dbReference type="Pfam" id="PF00071">
    <property type="entry name" value="Ras"/>
    <property type="match status" value="1"/>
</dbReference>
<dbReference type="Pfam" id="PF00620">
    <property type="entry name" value="RhoGAP"/>
    <property type="match status" value="1"/>
</dbReference>
<dbReference type="Pfam" id="PF16512">
    <property type="entry name" value="RhoGAP-FF1"/>
    <property type="match status" value="1"/>
</dbReference>
<dbReference type="Pfam" id="PF19518">
    <property type="entry name" value="RhoGAP_pG1_pG2"/>
    <property type="match status" value="1"/>
</dbReference>
<dbReference type="SMART" id="SM00324">
    <property type="entry name" value="RhoGAP"/>
    <property type="match status" value="1"/>
</dbReference>
<dbReference type="SUPFAM" id="SSF48350">
    <property type="entry name" value="GTPase activation domain, GAP"/>
    <property type="match status" value="1"/>
</dbReference>
<dbReference type="SUPFAM" id="SSF52540">
    <property type="entry name" value="P-loop containing nucleoside triphosphate hydrolases"/>
    <property type="match status" value="1"/>
</dbReference>
<dbReference type="PROSITE" id="PS51676">
    <property type="entry name" value="FF"/>
    <property type="match status" value="4"/>
</dbReference>
<dbReference type="PROSITE" id="PS51852">
    <property type="entry name" value="PG1"/>
    <property type="match status" value="1"/>
</dbReference>
<dbReference type="PROSITE" id="PS51853">
    <property type="entry name" value="PG2"/>
    <property type="match status" value="1"/>
</dbReference>
<dbReference type="PROSITE" id="PS50238">
    <property type="entry name" value="RHOGAP"/>
    <property type="match status" value="1"/>
</dbReference>
<name>RG190_DROME</name>
<accession>Q9VX32</accession>
<accession>Q8MRC6</accession>
<accession>Q95VZ5</accession>
<comment type="function">
    <text evidence="5">GTPase-activating protein (GAP) for RhoA/Rho1 that plays an essential role in the stability of dorsal branches of mushroom body (MB) neurons. The MB neurons are the center for olfactory learning and memory. Acts by converting RhoA/Rho1 to an inactive GDP-bound state, leading to repress the RhoA/Rho1-Drok-MRLC signaling pathway thereby maintaining axon branch stability.</text>
</comment>
<comment type="activity regulation">
    <text evidence="5 6">Negatively regulated by integrin, bsk and Src/Src64B.</text>
</comment>
<comment type="alternative products">
    <event type="alternative splicing"/>
    <isoform>
        <id>Q9VX32-1</id>
        <name>1</name>
        <sequence type="displayed"/>
    </isoform>
    <isoform>
        <id>Q9VX32-2</id>
        <name>2</name>
        <sequence type="described" ref="VSP_037211"/>
    </isoform>
</comment>